<proteinExistence type="inferred from homology"/>
<protein>
    <recommendedName>
        <fullName evidence="1">Formate--tetrahydrofolate ligase</fullName>
        <ecNumber evidence="1">6.3.4.3</ecNumber>
    </recommendedName>
    <alternativeName>
        <fullName evidence="1">Formyltetrahydrofolate synthetase</fullName>
        <shortName evidence="1">FHS</shortName>
        <shortName evidence="1">FTHFS</shortName>
    </alternativeName>
</protein>
<sequence>MLSDIAIAQRARLEPITKVAEQIGLGPEDLELYGRYKAKVADHVWPRVRSNPDGKLILVTAISPTPAGEGKTTVTVGLGQAMSRIGKRAIIALREPSLGPAFGVKGGAAGGGYSQVVPMDEINLHFTGDFHAVTAANNLLAAMIDNHLHQGNKLGLDPRQITFKRVLDMNDRALRSVVIGLGGKNGGVPRQEEFMITPASEVMATLCLAEDLADLKRRCGEIIVGYTYDGAPVRARDLKAEGAMATLLKEAIKPNLVQTLENTPAFVHGGPFANIAHGCNTVVATRLALKLADYVITEAGFGADLGAEKFIDIKCRLSGLRPDAVVVVATIRSLKMHGGLKKDDLAREDLEALQRGSANLMRHLRNVTEVFGLPAVVAINRFAADTEAEIALLRALVEEAGATAVVADVHARGGDGGIELAQRVVELVEQPNRFRFAYDDEDSLKTKIEKVATRIYGADGVDFTREASRMLKKLESEGFGRAPVCIAKTQYSFSDDPKKLGAPTGWRLTVREVRPSAGAGFVVALTGEIMTMPGLPPVPAAESIDVSDDGEITGLF</sequence>
<name>FTHS_SYMTH</name>
<dbReference type="EC" id="6.3.4.3" evidence="1"/>
<dbReference type="EMBL" id="AP006840">
    <property type="protein sequence ID" value="BAD42171.1"/>
    <property type="molecule type" value="Genomic_DNA"/>
</dbReference>
<dbReference type="RefSeq" id="WP_011197302.1">
    <property type="nucleotide sequence ID" value="NC_006177.1"/>
</dbReference>
<dbReference type="SMR" id="Q67JH9"/>
<dbReference type="STRING" id="292459.STH3189"/>
<dbReference type="KEGG" id="sth:STH3189"/>
<dbReference type="eggNOG" id="COG2759">
    <property type="taxonomic scope" value="Bacteria"/>
</dbReference>
<dbReference type="HOGENOM" id="CLU_003601_3_3_9"/>
<dbReference type="OrthoDB" id="9761733at2"/>
<dbReference type="UniPathway" id="UPA00193"/>
<dbReference type="Proteomes" id="UP000000417">
    <property type="component" value="Chromosome"/>
</dbReference>
<dbReference type="GO" id="GO:0005524">
    <property type="term" value="F:ATP binding"/>
    <property type="evidence" value="ECO:0007669"/>
    <property type="project" value="UniProtKB-UniRule"/>
</dbReference>
<dbReference type="GO" id="GO:0004329">
    <property type="term" value="F:formate-tetrahydrofolate ligase activity"/>
    <property type="evidence" value="ECO:0007669"/>
    <property type="project" value="UniProtKB-UniRule"/>
</dbReference>
<dbReference type="GO" id="GO:0035999">
    <property type="term" value="P:tetrahydrofolate interconversion"/>
    <property type="evidence" value="ECO:0007669"/>
    <property type="project" value="UniProtKB-UniRule"/>
</dbReference>
<dbReference type="CDD" id="cd00477">
    <property type="entry name" value="FTHFS"/>
    <property type="match status" value="1"/>
</dbReference>
<dbReference type="FunFam" id="3.30.1510.10:FF:000001">
    <property type="entry name" value="Formate--tetrahydrofolate ligase"/>
    <property type="match status" value="1"/>
</dbReference>
<dbReference type="FunFam" id="3.10.410.10:FF:000001">
    <property type="entry name" value="Putative formate--tetrahydrofolate ligase"/>
    <property type="match status" value="1"/>
</dbReference>
<dbReference type="Gene3D" id="3.30.1510.10">
    <property type="entry name" value="Domain 2, N(10)-formyltetrahydrofolate synthetase"/>
    <property type="match status" value="1"/>
</dbReference>
<dbReference type="Gene3D" id="3.10.410.10">
    <property type="entry name" value="Formyltetrahydrofolate synthetase, domain 3"/>
    <property type="match status" value="1"/>
</dbReference>
<dbReference type="Gene3D" id="3.40.50.300">
    <property type="entry name" value="P-loop containing nucleotide triphosphate hydrolases"/>
    <property type="match status" value="1"/>
</dbReference>
<dbReference type="HAMAP" id="MF_01543">
    <property type="entry name" value="FTHFS"/>
    <property type="match status" value="1"/>
</dbReference>
<dbReference type="InterPro" id="IPR000559">
    <property type="entry name" value="Formate_THF_ligase"/>
</dbReference>
<dbReference type="InterPro" id="IPR020628">
    <property type="entry name" value="Formate_THF_ligase_CS"/>
</dbReference>
<dbReference type="InterPro" id="IPR027417">
    <property type="entry name" value="P-loop_NTPase"/>
</dbReference>
<dbReference type="NCBIfam" id="NF010030">
    <property type="entry name" value="PRK13505.1"/>
    <property type="match status" value="1"/>
</dbReference>
<dbReference type="Pfam" id="PF01268">
    <property type="entry name" value="FTHFS"/>
    <property type="match status" value="1"/>
</dbReference>
<dbReference type="SUPFAM" id="SSF52540">
    <property type="entry name" value="P-loop containing nucleoside triphosphate hydrolases"/>
    <property type="match status" value="1"/>
</dbReference>
<dbReference type="PROSITE" id="PS00721">
    <property type="entry name" value="FTHFS_1"/>
    <property type="match status" value="1"/>
</dbReference>
<dbReference type="PROSITE" id="PS00722">
    <property type="entry name" value="FTHFS_2"/>
    <property type="match status" value="1"/>
</dbReference>
<feature type="chain" id="PRO_0000199401" description="Formate--tetrahydrofolate ligase">
    <location>
        <begin position="1"/>
        <end position="556"/>
    </location>
</feature>
<feature type="binding site" evidence="1">
    <location>
        <begin position="65"/>
        <end position="72"/>
    </location>
    <ligand>
        <name>ATP</name>
        <dbReference type="ChEBI" id="CHEBI:30616"/>
    </ligand>
</feature>
<comment type="catalytic activity">
    <reaction evidence="1">
        <text>(6S)-5,6,7,8-tetrahydrofolate + formate + ATP = (6R)-10-formyltetrahydrofolate + ADP + phosphate</text>
        <dbReference type="Rhea" id="RHEA:20221"/>
        <dbReference type="ChEBI" id="CHEBI:15740"/>
        <dbReference type="ChEBI" id="CHEBI:30616"/>
        <dbReference type="ChEBI" id="CHEBI:43474"/>
        <dbReference type="ChEBI" id="CHEBI:57453"/>
        <dbReference type="ChEBI" id="CHEBI:195366"/>
        <dbReference type="ChEBI" id="CHEBI:456216"/>
        <dbReference type="EC" id="6.3.4.3"/>
    </reaction>
</comment>
<comment type="pathway">
    <text evidence="1">One-carbon metabolism; tetrahydrofolate interconversion.</text>
</comment>
<comment type="similarity">
    <text evidence="1">Belongs to the formate--tetrahydrofolate ligase family.</text>
</comment>
<accession>Q67JH9</accession>
<organism>
    <name type="scientific">Symbiobacterium thermophilum (strain DSM 24528 / JCM 14929 / IAM 14863 / T)</name>
    <dbReference type="NCBI Taxonomy" id="292459"/>
    <lineage>
        <taxon>Bacteria</taxon>
        <taxon>Bacillati</taxon>
        <taxon>Bacillota</taxon>
        <taxon>Clostridia</taxon>
        <taxon>Eubacteriales</taxon>
        <taxon>Symbiobacteriaceae</taxon>
        <taxon>Symbiobacterium</taxon>
    </lineage>
</organism>
<reference key="1">
    <citation type="journal article" date="2004" name="Nucleic Acids Res.">
        <title>Genome sequence of Symbiobacterium thermophilum, an uncultivable bacterium that depends on microbial commensalism.</title>
        <authorList>
            <person name="Ueda K."/>
            <person name="Yamashita A."/>
            <person name="Ishikawa J."/>
            <person name="Shimada M."/>
            <person name="Watsuji T."/>
            <person name="Morimura K."/>
            <person name="Ikeda H."/>
            <person name="Hattori M."/>
            <person name="Beppu T."/>
        </authorList>
    </citation>
    <scope>NUCLEOTIDE SEQUENCE [LARGE SCALE GENOMIC DNA]</scope>
    <source>
        <strain>DSM 24528 / JCM 14929 / IAM 14863 / T</strain>
    </source>
</reference>
<keyword id="KW-0067">ATP-binding</keyword>
<keyword id="KW-0436">Ligase</keyword>
<keyword id="KW-0547">Nucleotide-binding</keyword>
<keyword id="KW-0554">One-carbon metabolism</keyword>
<keyword id="KW-1185">Reference proteome</keyword>
<gene>
    <name evidence="1" type="primary">fhs</name>
    <name type="ordered locus">STH3189</name>
</gene>
<evidence type="ECO:0000255" key="1">
    <source>
        <dbReference type="HAMAP-Rule" id="MF_01543"/>
    </source>
</evidence>